<comment type="function">
    <text evidence="1">Catalyzes the ATP-dependent 2-thiolation of cytidine in position 32 of tRNA, to form 2-thiocytidine (s(2)C32). The sulfur atoms are provided by the cysteine/cysteine desulfurase (IscS) system.</text>
</comment>
<comment type="catalytic activity">
    <reaction evidence="1">
        <text>cytidine(32) in tRNA + S-sulfanyl-L-cysteinyl-[cysteine desulfurase] + AH2 + ATP = 2-thiocytidine(32) in tRNA + L-cysteinyl-[cysteine desulfurase] + A + AMP + diphosphate + H(+)</text>
        <dbReference type="Rhea" id="RHEA:57048"/>
        <dbReference type="Rhea" id="RHEA-COMP:10288"/>
        <dbReference type="Rhea" id="RHEA-COMP:12157"/>
        <dbReference type="Rhea" id="RHEA-COMP:12158"/>
        <dbReference type="Rhea" id="RHEA-COMP:14821"/>
        <dbReference type="ChEBI" id="CHEBI:13193"/>
        <dbReference type="ChEBI" id="CHEBI:15378"/>
        <dbReference type="ChEBI" id="CHEBI:17499"/>
        <dbReference type="ChEBI" id="CHEBI:29950"/>
        <dbReference type="ChEBI" id="CHEBI:30616"/>
        <dbReference type="ChEBI" id="CHEBI:33019"/>
        <dbReference type="ChEBI" id="CHEBI:61963"/>
        <dbReference type="ChEBI" id="CHEBI:82748"/>
        <dbReference type="ChEBI" id="CHEBI:141453"/>
        <dbReference type="ChEBI" id="CHEBI:456215"/>
    </reaction>
    <physiologicalReaction direction="left-to-right" evidence="1">
        <dbReference type="Rhea" id="RHEA:57049"/>
    </physiologicalReaction>
</comment>
<comment type="cofactor">
    <cofactor evidence="1">
        <name>Mg(2+)</name>
        <dbReference type="ChEBI" id="CHEBI:18420"/>
    </cofactor>
</comment>
<comment type="cofactor">
    <cofactor evidence="1">
        <name>[4Fe-4S] cluster</name>
        <dbReference type="ChEBI" id="CHEBI:49883"/>
    </cofactor>
    <text evidence="1">Binds 1 [4Fe-4S] cluster per subunit. The cluster is chelated by three Cys residues, the fourth Fe has a free coordination site that may bind a sulfur atom transferred from the persulfide of IscS.</text>
</comment>
<comment type="pathway">
    <text evidence="1">tRNA modification.</text>
</comment>
<comment type="subunit">
    <text evidence="1">Homodimer.</text>
</comment>
<comment type="subcellular location">
    <subcellularLocation>
        <location evidence="1">Cytoplasm</location>
    </subcellularLocation>
</comment>
<comment type="miscellaneous">
    <text evidence="1">The thiolation reaction likely consists of two steps: a first activation step by ATP to form an adenylated intermediate of the target base of tRNA, and a second nucleophilic substitution step of the sulfur (S) atom supplied by the hydrosulfide attached to the Fe-S cluster.</text>
</comment>
<comment type="similarity">
    <text evidence="1">Belongs to the TtcA family.</text>
</comment>
<proteinExistence type="inferred from homology"/>
<feature type="chain" id="PRO_1000216136" description="tRNA-cytidine(32) 2-sulfurtransferase">
    <location>
        <begin position="1"/>
        <end position="309"/>
    </location>
</feature>
<feature type="short sequence motif" description="PP-loop motif" evidence="1">
    <location>
        <begin position="57"/>
        <end position="62"/>
    </location>
</feature>
<feature type="binding site" evidence="1">
    <location>
        <position position="132"/>
    </location>
    <ligand>
        <name>[4Fe-4S] cluster</name>
        <dbReference type="ChEBI" id="CHEBI:49883"/>
    </ligand>
</feature>
<feature type="binding site" evidence="1">
    <location>
        <position position="135"/>
    </location>
    <ligand>
        <name>[4Fe-4S] cluster</name>
        <dbReference type="ChEBI" id="CHEBI:49883"/>
    </ligand>
</feature>
<feature type="binding site" evidence="1">
    <location>
        <position position="223"/>
    </location>
    <ligand>
        <name>[4Fe-4S] cluster</name>
        <dbReference type="ChEBI" id="CHEBI:49883"/>
    </ligand>
</feature>
<name>TTCA_VARPS</name>
<dbReference type="EC" id="2.8.1.-" evidence="1"/>
<dbReference type="EMBL" id="CP001635">
    <property type="protein sequence ID" value="ACS17625.1"/>
    <property type="molecule type" value="Genomic_DNA"/>
</dbReference>
<dbReference type="SMR" id="C5CNK9"/>
<dbReference type="STRING" id="543728.Vapar_0974"/>
<dbReference type="KEGG" id="vap:Vapar_0974"/>
<dbReference type="eggNOG" id="COG0037">
    <property type="taxonomic scope" value="Bacteria"/>
</dbReference>
<dbReference type="HOGENOM" id="CLU_026481_0_0_4"/>
<dbReference type="OrthoDB" id="9801054at2"/>
<dbReference type="GO" id="GO:0005737">
    <property type="term" value="C:cytoplasm"/>
    <property type="evidence" value="ECO:0007669"/>
    <property type="project" value="UniProtKB-SubCell"/>
</dbReference>
<dbReference type="GO" id="GO:0051539">
    <property type="term" value="F:4 iron, 4 sulfur cluster binding"/>
    <property type="evidence" value="ECO:0007669"/>
    <property type="project" value="UniProtKB-UniRule"/>
</dbReference>
<dbReference type="GO" id="GO:0005524">
    <property type="term" value="F:ATP binding"/>
    <property type="evidence" value="ECO:0007669"/>
    <property type="project" value="UniProtKB-UniRule"/>
</dbReference>
<dbReference type="GO" id="GO:0000287">
    <property type="term" value="F:magnesium ion binding"/>
    <property type="evidence" value="ECO:0007669"/>
    <property type="project" value="UniProtKB-UniRule"/>
</dbReference>
<dbReference type="GO" id="GO:0016783">
    <property type="term" value="F:sulfurtransferase activity"/>
    <property type="evidence" value="ECO:0007669"/>
    <property type="project" value="UniProtKB-UniRule"/>
</dbReference>
<dbReference type="GO" id="GO:0000049">
    <property type="term" value="F:tRNA binding"/>
    <property type="evidence" value="ECO:0007669"/>
    <property type="project" value="UniProtKB-KW"/>
</dbReference>
<dbReference type="GO" id="GO:0034227">
    <property type="term" value="P:tRNA thio-modification"/>
    <property type="evidence" value="ECO:0007669"/>
    <property type="project" value="UniProtKB-UniRule"/>
</dbReference>
<dbReference type="CDD" id="cd24138">
    <property type="entry name" value="TtcA-like"/>
    <property type="match status" value="1"/>
</dbReference>
<dbReference type="Gene3D" id="3.40.50.620">
    <property type="entry name" value="HUPs"/>
    <property type="match status" value="1"/>
</dbReference>
<dbReference type="HAMAP" id="MF_01850">
    <property type="entry name" value="TtcA"/>
    <property type="match status" value="1"/>
</dbReference>
<dbReference type="InterPro" id="IPR014729">
    <property type="entry name" value="Rossmann-like_a/b/a_fold"/>
</dbReference>
<dbReference type="InterPro" id="IPR011063">
    <property type="entry name" value="TilS/TtcA_N"/>
</dbReference>
<dbReference type="InterPro" id="IPR012089">
    <property type="entry name" value="tRNA_Cyd_32_2_STrfase"/>
</dbReference>
<dbReference type="InterPro" id="IPR035107">
    <property type="entry name" value="tRNA_thiolation_TtcA_Ctu1"/>
</dbReference>
<dbReference type="NCBIfam" id="NF007972">
    <property type="entry name" value="PRK10696.1"/>
    <property type="match status" value="1"/>
</dbReference>
<dbReference type="PANTHER" id="PTHR43686:SF1">
    <property type="entry name" value="AMINOTRAN_5 DOMAIN-CONTAINING PROTEIN"/>
    <property type="match status" value="1"/>
</dbReference>
<dbReference type="PANTHER" id="PTHR43686">
    <property type="entry name" value="SULFURTRANSFERASE-RELATED"/>
    <property type="match status" value="1"/>
</dbReference>
<dbReference type="Pfam" id="PF01171">
    <property type="entry name" value="ATP_bind_3"/>
    <property type="match status" value="1"/>
</dbReference>
<dbReference type="PIRSF" id="PIRSF004976">
    <property type="entry name" value="ATPase_YdaO"/>
    <property type="match status" value="1"/>
</dbReference>
<dbReference type="SUPFAM" id="SSF52402">
    <property type="entry name" value="Adenine nucleotide alpha hydrolases-like"/>
    <property type="match status" value="1"/>
</dbReference>
<protein>
    <recommendedName>
        <fullName evidence="1">tRNA-cytidine(32) 2-sulfurtransferase</fullName>
        <ecNumber evidence="1">2.8.1.-</ecNumber>
    </recommendedName>
    <alternativeName>
        <fullName evidence="1">Two-thiocytidine biosynthesis protein A</fullName>
    </alternativeName>
    <alternativeName>
        <fullName evidence="1">tRNA 2-thiocytidine biosynthesis protein TtcA</fullName>
    </alternativeName>
</protein>
<organism>
    <name type="scientific">Variovorax paradoxus (strain S110)</name>
    <dbReference type="NCBI Taxonomy" id="543728"/>
    <lineage>
        <taxon>Bacteria</taxon>
        <taxon>Pseudomonadati</taxon>
        <taxon>Pseudomonadota</taxon>
        <taxon>Betaproteobacteria</taxon>
        <taxon>Burkholderiales</taxon>
        <taxon>Comamonadaceae</taxon>
        <taxon>Variovorax</taxon>
    </lineage>
</organism>
<reference key="1">
    <citation type="journal article" date="2011" name="J. Bacteriol.">
        <title>Complete genome sequence of the metabolically versatile plant growth-promoting endophyte, Variovorax paradoxus S110.</title>
        <authorList>
            <person name="Han J.I."/>
            <person name="Choi H.K."/>
            <person name="Lee S.W."/>
            <person name="Orwin P.M."/>
            <person name="Kim J."/>
            <person name="Laroe S.L."/>
            <person name="Kim T.G."/>
            <person name="O'Neil J."/>
            <person name="Leadbetter J.R."/>
            <person name="Lee S.Y."/>
            <person name="Hur C.G."/>
            <person name="Spain J.C."/>
            <person name="Ovchinnikova G."/>
            <person name="Goodwin L."/>
            <person name="Han C."/>
        </authorList>
    </citation>
    <scope>NUCLEOTIDE SEQUENCE [LARGE SCALE GENOMIC DNA]</scope>
    <source>
        <strain>S110</strain>
    </source>
</reference>
<evidence type="ECO:0000255" key="1">
    <source>
        <dbReference type="HAMAP-Rule" id="MF_01850"/>
    </source>
</evidence>
<keyword id="KW-0004">4Fe-4S</keyword>
<keyword id="KW-0067">ATP-binding</keyword>
<keyword id="KW-0963">Cytoplasm</keyword>
<keyword id="KW-0408">Iron</keyword>
<keyword id="KW-0411">Iron-sulfur</keyword>
<keyword id="KW-0460">Magnesium</keyword>
<keyword id="KW-0479">Metal-binding</keyword>
<keyword id="KW-0547">Nucleotide-binding</keyword>
<keyword id="KW-0694">RNA-binding</keyword>
<keyword id="KW-0808">Transferase</keyword>
<keyword id="KW-0819">tRNA processing</keyword>
<keyword id="KW-0820">tRNA-binding</keyword>
<accession>C5CNK9</accession>
<sequence length="309" mass="34746">MNAVWIDEAPVAGAATNSLKIERETHKLEKRLCREVGRAIVDYNMIEEGDKVMVCVSGGKDSYAMLDILLKLRARAPIHFDIVAVNLDQKQPGFPEEVLPRYLSELGVDFHIENQDTYSIVKRVIPEGKTTCGLCSRLRRGILYRVADELGATKVALGHHRDDMLQTFFLNMFFAGKLKSMPPKLVSDDGKHIVIRPLAYVAEKDLVRWAQHREFPIIPCTLCGSQENLQRKQVGEMLREWDRKHLGRVENMFTALQNVVPSHLLDGTQHDFKGLKATGVADEDGDKAFDTPSFDLLSQAPAALRILQG</sequence>
<gene>
    <name evidence="1" type="primary">ttcA</name>
    <name type="ordered locus">Vapar_0974</name>
</gene>